<name>RL19_THEYD</name>
<sequence length="120" mass="13879">MNQLIIRAIEERFKKSNIPDFKPGDTVKVHVKVKEGDKERIQVFEGVVIARRGGGLRETFTVRKISFGVGVERVFPLHSPIIDKIELVRRGDVRRAKLYYLRTKKGKEAKVKEKTDYQKA</sequence>
<organism>
    <name type="scientific">Thermodesulfovibrio yellowstonii (strain ATCC 51303 / DSM 11347 / YP87)</name>
    <dbReference type="NCBI Taxonomy" id="289376"/>
    <lineage>
        <taxon>Bacteria</taxon>
        <taxon>Pseudomonadati</taxon>
        <taxon>Nitrospirota</taxon>
        <taxon>Thermodesulfovibrionia</taxon>
        <taxon>Thermodesulfovibrionales</taxon>
        <taxon>Thermodesulfovibrionaceae</taxon>
        <taxon>Thermodesulfovibrio</taxon>
    </lineage>
</organism>
<accession>B5YK97</accession>
<keyword id="KW-1185">Reference proteome</keyword>
<keyword id="KW-0687">Ribonucleoprotein</keyword>
<keyword id="KW-0689">Ribosomal protein</keyword>
<proteinExistence type="inferred from homology"/>
<evidence type="ECO:0000255" key="1">
    <source>
        <dbReference type="HAMAP-Rule" id="MF_00402"/>
    </source>
</evidence>
<evidence type="ECO:0000305" key="2"/>
<comment type="function">
    <text evidence="1">This protein is located at the 30S-50S ribosomal subunit interface and may play a role in the structure and function of the aminoacyl-tRNA binding site.</text>
</comment>
<comment type="similarity">
    <text evidence="1">Belongs to the bacterial ribosomal protein bL19 family.</text>
</comment>
<dbReference type="EMBL" id="CP001147">
    <property type="protein sequence ID" value="ACI21105.1"/>
    <property type="molecule type" value="Genomic_DNA"/>
</dbReference>
<dbReference type="RefSeq" id="WP_012545830.1">
    <property type="nucleotide sequence ID" value="NC_011296.1"/>
</dbReference>
<dbReference type="RefSeq" id="YP_002248662.1">
    <property type="nucleotide sequence ID" value="NC_011296.1"/>
</dbReference>
<dbReference type="SMR" id="B5YK97"/>
<dbReference type="FunCoup" id="B5YK97">
    <property type="interactions" value="561"/>
</dbReference>
<dbReference type="STRING" id="289376.THEYE_A0821"/>
<dbReference type="EnsemblBacteria" id="ACI21105">
    <property type="protein sequence ID" value="ACI21105"/>
    <property type="gene ID" value="THEYE_A0821"/>
</dbReference>
<dbReference type="KEGG" id="tye:THEYE_A0821"/>
<dbReference type="PATRIC" id="fig|289376.4.peg.811"/>
<dbReference type="eggNOG" id="COG0335">
    <property type="taxonomic scope" value="Bacteria"/>
</dbReference>
<dbReference type="HOGENOM" id="CLU_103507_2_1_0"/>
<dbReference type="InParanoid" id="B5YK97"/>
<dbReference type="OrthoDB" id="9803541at2"/>
<dbReference type="Proteomes" id="UP000000718">
    <property type="component" value="Chromosome"/>
</dbReference>
<dbReference type="GO" id="GO:0022625">
    <property type="term" value="C:cytosolic large ribosomal subunit"/>
    <property type="evidence" value="ECO:0000318"/>
    <property type="project" value="GO_Central"/>
</dbReference>
<dbReference type="GO" id="GO:0003735">
    <property type="term" value="F:structural constituent of ribosome"/>
    <property type="evidence" value="ECO:0000318"/>
    <property type="project" value="GO_Central"/>
</dbReference>
<dbReference type="GO" id="GO:0006412">
    <property type="term" value="P:translation"/>
    <property type="evidence" value="ECO:0007669"/>
    <property type="project" value="UniProtKB-UniRule"/>
</dbReference>
<dbReference type="FunFam" id="2.30.30.790:FF:000001">
    <property type="entry name" value="50S ribosomal protein L19"/>
    <property type="match status" value="1"/>
</dbReference>
<dbReference type="Gene3D" id="2.30.30.790">
    <property type="match status" value="1"/>
</dbReference>
<dbReference type="HAMAP" id="MF_00402">
    <property type="entry name" value="Ribosomal_bL19"/>
    <property type="match status" value="1"/>
</dbReference>
<dbReference type="InterPro" id="IPR001857">
    <property type="entry name" value="Ribosomal_bL19"/>
</dbReference>
<dbReference type="InterPro" id="IPR018257">
    <property type="entry name" value="Ribosomal_bL19_CS"/>
</dbReference>
<dbReference type="InterPro" id="IPR038657">
    <property type="entry name" value="Ribosomal_bL19_sf"/>
</dbReference>
<dbReference type="InterPro" id="IPR008991">
    <property type="entry name" value="Translation_prot_SH3-like_sf"/>
</dbReference>
<dbReference type="NCBIfam" id="TIGR01024">
    <property type="entry name" value="rplS_bact"/>
    <property type="match status" value="1"/>
</dbReference>
<dbReference type="PANTHER" id="PTHR15680:SF9">
    <property type="entry name" value="LARGE RIBOSOMAL SUBUNIT PROTEIN BL19M"/>
    <property type="match status" value="1"/>
</dbReference>
<dbReference type="PANTHER" id="PTHR15680">
    <property type="entry name" value="RIBOSOMAL PROTEIN L19"/>
    <property type="match status" value="1"/>
</dbReference>
<dbReference type="Pfam" id="PF01245">
    <property type="entry name" value="Ribosomal_L19"/>
    <property type="match status" value="1"/>
</dbReference>
<dbReference type="PIRSF" id="PIRSF002191">
    <property type="entry name" value="Ribosomal_L19"/>
    <property type="match status" value="1"/>
</dbReference>
<dbReference type="PRINTS" id="PR00061">
    <property type="entry name" value="RIBOSOMALL19"/>
</dbReference>
<dbReference type="SUPFAM" id="SSF50104">
    <property type="entry name" value="Translation proteins SH3-like domain"/>
    <property type="match status" value="1"/>
</dbReference>
<dbReference type="PROSITE" id="PS01015">
    <property type="entry name" value="RIBOSOMAL_L19"/>
    <property type="match status" value="1"/>
</dbReference>
<protein>
    <recommendedName>
        <fullName evidence="1">Large ribosomal subunit protein bL19</fullName>
    </recommendedName>
    <alternativeName>
        <fullName evidence="2">50S ribosomal protein L19</fullName>
    </alternativeName>
</protein>
<reference key="1">
    <citation type="submission" date="2008-08" db="EMBL/GenBank/DDBJ databases">
        <title>The complete genome sequence of Thermodesulfovibrio yellowstonii strain ATCC 51303 / DSM 11347 / YP87.</title>
        <authorList>
            <person name="Dodson R.J."/>
            <person name="Durkin A.S."/>
            <person name="Wu M."/>
            <person name="Eisen J."/>
            <person name="Sutton G."/>
        </authorList>
    </citation>
    <scope>NUCLEOTIDE SEQUENCE [LARGE SCALE GENOMIC DNA]</scope>
    <source>
        <strain>ATCC 51303 / DSM 11347 / YP87</strain>
    </source>
</reference>
<feature type="chain" id="PRO_1000193908" description="Large ribosomal subunit protein bL19">
    <location>
        <begin position="1"/>
        <end position="120"/>
    </location>
</feature>
<gene>
    <name evidence="1" type="primary">rplS</name>
    <name type="ordered locus">THEYE_A0821</name>
</gene>